<name>RADA_RICTY</name>
<dbReference type="EC" id="3.6.4.-" evidence="1"/>
<dbReference type="EMBL" id="AE017197">
    <property type="protein sequence ID" value="AAU04003.1"/>
    <property type="molecule type" value="Genomic_DNA"/>
</dbReference>
<dbReference type="RefSeq" id="WP_011190984.1">
    <property type="nucleotide sequence ID" value="NC_006142.1"/>
</dbReference>
<dbReference type="SMR" id="Q68WI9"/>
<dbReference type="MEROPS" id="S16.A04"/>
<dbReference type="KEGG" id="rty:RT0534"/>
<dbReference type="eggNOG" id="COG1066">
    <property type="taxonomic scope" value="Bacteria"/>
</dbReference>
<dbReference type="HOGENOM" id="CLU_018264_0_1_5"/>
<dbReference type="OrthoDB" id="9803906at2"/>
<dbReference type="Proteomes" id="UP000000604">
    <property type="component" value="Chromosome"/>
</dbReference>
<dbReference type="GO" id="GO:0005829">
    <property type="term" value="C:cytosol"/>
    <property type="evidence" value="ECO:0007669"/>
    <property type="project" value="TreeGrafter"/>
</dbReference>
<dbReference type="GO" id="GO:0005524">
    <property type="term" value="F:ATP binding"/>
    <property type="evidence" value="ECO:0007669"/>
    <property type="project" value="UniProtKB-UniRule"/>
</dbReference>
<dbReference type="GO" id="GO:0016887">
    <property type="term" value="F:ATP hydrolysis activity"/>
    <property type="evidence" value="ECO:0007669"/>
    <property type="project" value="InterPro"/>
</dbReference>
<dbReference type="GO" id="GO:0140664">
    <property type="term" value="F:ATP-dependent DNA damage sensor activity"/>
    <property type="evidence" value="ECO:0007669"/>
    <property type="project" value="InterPro"/>
</dbReference>
<dbReference type="GO" id="GO:0003684">
    <property type="term" value="F:damaged DNA binding"/>
    <property type="evidence" value="ECO:0007669"/>
    <property type="project" value="InterPro"/>
</dbReference>
<dbReference type="GO" id="GO:0008270">
    <property type="term" value="F:zinc ion binding"/>
    <property type="evidence" value="ECO:0007669"/>
    <property type="project" value="UniProtKB-KW"/>
</dbReference>
<dbReference type="GO" id="GO:0000725">
    <property type="term" value="P:recombinational repair"/>
    <property type="evidence" value="ECO:0007669"/>
    <property type="project" value="UniProtKB-UniRule"/>
</dbReference>
<dbReference type="CDD" id="cd01121">
    <property type="entry name" value="RadA_SMS_N"/>
    <property type="match status" value="1"/>
</dbReference>
<dbReference type="FunFam" id="3.40.50.300:FF:000050">
    <property type="entry name" value="DNA repair protein RadA"/>
    <property type="match status" value="1"/>
</dbReference>
<dbReference type="Gene3D" id="3.30.230.10">
    <property type="match status" value="1"/>
</dbReference>
<dbReference type="Gene3D" id="3.40.50.300">
    <property type="entry name" value="P-loop containing nucleotide triphosphate hydrolases"/>
    <property type="match status" value="1"/>
</dbReference>
<dbReference type="HAMAP" id="MF_01498">
    <property type="entry name" value="RadA_bact"/>
    <property type="match status" value="1"/>
</dbReference>
<dbReference type="InterPro" id="IPR003593">
    <property type="entry name" value="AAA+_ATPase"/>
</dbReference>
<dbReference type="InterPro" id="IPR004504">
    <property type="entry name" value="DNA_repair_RadA"/>
</dbReference>
<dbReference type="InterPro" id="IPR014774">
    <property type="entry name" value="KaiC-like_dom"/>
</dbReference>
<dbReference type="InterPro" id="IPR027417">
    <property type="entry name" value="P-loop_NTPase"/>
</dbReference>
<dbReference type="InterPro" id="IPR020588">
    <property type="entry name" value="RecA_ATP-bd"/>
</dbReference>
<dbReference type="InterPro" id="IPR020568">
    <property type="entry name" value="Ribosomal_Su5_D2-typ_SF"/>
</dbReference>
<dbReference type="InterPro" id="IPR014721">
    <property type="entry name" value="Ribsml_uS5_D2-typ_fold_subgr"/>
</dbReference>
<dbReference type="InterPro" id="IPR041166">
    <property type="entry name" value="Rubredoxin_2"/>
</dbReference>
<dbReference type="NCBIfam" id="TIGR00416">
    <property type="entry name" value="sms"/>
    <property type="match status" value="1"/>
</dbReference>
<dbReference type="PANTHER" id="PTHR32472">
    <property type="entry name" value="DNA REPAIR PROTEIN RADA"/>
    <property type="match status" value="1"/>
</dbReference>
<dbReference type="PANTHER" id="PTHR32472:SF10">
    <property type="entry name" value="DNA REPAIR PROTEIN RADA-LIKE PROTEIN"/>
    <property type="match status" value="1"/>
</dbReference>
<dbReference type="Pfam" id="PF06745">
    <property type="entry name" value="ATPase"/>
    <property type="match status" value="1"/>
</dbReference>
<dbReference type="Pfam" id="PF13541">
    <property type="entry name" value="ChlI"/>
    <property type="match status" value="1"/>
</dbReference>
<dbReference type="Pfam" id="PF18073">
    <property type="entry name" value="Zn_ribbon_LapB"/>
    <property type="match status" value="1"/>
</dbReference>
<dbReference type="PRINTS" id="PR01874">
    <property type="entry name" value="DNAREPAIRADA"/>
</dbReference>
<dbReference type="SMART" id="SM00382">
    <property type="entry name" value="AAA"/>
    <property type="match status" value="1"/>
</dbReference>
<dbReference type="SUPFAM" id="SSF52540">
    <property type="entry name" value="P-loop containing nucleoside triphosphate hydrolases"/>
    <property type="match status" value="1"/>
</dbReference>
<dbReference type="SUPFAM" id="SSF54211">
    <property type="entry name" value="Ribosomal protein S5 domain 2-like"/>
    <property type="match status" value="1"/>
</dbReference>
<dbReference type="PROSITE" id="PS50162">
    <property type="entry name" value="RECA_2"/>
    <property type="match status" value="1"/>
</dbReference>
<proteinExistence type="inferred from homology"/>
<protein>
    <recommendedName>
        <fullName evidence="1">DNA repair protein RadA</fullName>
        <ecNumber evidence="1">3.6.4.-</ecNumber>
    </recommendedName>
    <alternativeName>
        <fullName evidence="1">Branch migration protein RadA</fullName>
    </alternativeName>
</protein>
<keyword id="KW-0067">ATP-binding</keyword>
<keyword id="KW-0227">DNA damage</keyword>
<keyword id="KW-0234">DNA repair</keyword>
<keyword id="KW-0238">DNA-binding</keyword>
<keyword id="KW-0378">Hydrolase</keyword>
<keyword id="KW-0479">Metal-binding</keyword>
<keyword id="KW-0547">Nucleotide-binding</keyword>
<keyword id="KW-0346">Stress response</keyword>
<keyword id="KW-0862">Zinc</keyword>
<keyword id="KW-0863">Zinc-finger</keyword>
<gene>
    <name evidence="1" type="primary">radA</name>
    <name type="ordered locus">RT0534</name>
</gene>
<reference key="1">
    <citation type="journal article" date="2004" name="J. Bacteriol.">
        <title>Complete genome sequence of Rickettsia typhi and comparison with sequences of other Rickettsiae.</title>
        <authorList>
            <person name="McLeod M.P."/>
            <person name="Qin X."/>
            <person name="Karpathy S.E."/>
            <person name="Gioia J."/>
            <person name="Highlander S.K."/>
            <person name="Fox G.E."/>
            <person name="McNeill T.Z."/>
            <person name="Jiang H."/>
            <person name="Muzny D."/>
            <person name="Jacob L.S."/>
            <person name="Hawes A.C."/>
            <person name="Sodergren E."/>
            <person name="Gill R."/>
            <person name="Hume J."/>
            <person name="Morgan M."/>
            <person name="Fan G."/>
            <person name="Amin A.G."/>
            <person name="Gibbs R.A."/>
            <person name="Hong C."/>
            <person name="Yu X.-J."/>
            <person name="Walker D.H."/>
            <person name="Weinstock G.M."/>
        </authorList>
    </citation>
    <scope>NUCLEOTIDE SEQUENCE [LARGE SCALE GENOMIC DNA]</scope>
    <source>
        <strain>ATCC VR-144 / Wilmington</strain>
    </source>
</reference>
<accession>Q68WI9</accession>
<sequence>MTRDKKHYICSNCANISHKWSGQCFDCGVWGSIVEEIISTNKSIITGSKQTFDKLSCDVSEPLRISTPISELNRVLGGGLVLGSAILIGGEPGIGKSTLLLQLTASNFESKMRCLYITGEESLDQIKLRAIRLNITNYNTAILAATNLEDIIASIDDNNNNIDLVVIDSIQTITTKELSSPPGTVSQIRTCANELVNYSKQNNIIILLSCHVTKDGQIAGPKILEHLVDTVLYFEGDHNNHFRILRSYKNRFGSIGEIGVFEMSSSGILEVTNHSELFLMKREHNVVGTSIFAGVEGSRPLLMEVQALIVPSNMLTPKRSAVGWDANRLSMILAVLSSRIGLNLANYEIYLSIAGGLKITDPASDLAVAASLISAATSIPLPEHSVFFGEISLSGEIRKTAKAETRIKEAVKLGFNKVICSKLENLTYDFICSCTHLQDLKEIIK</sequence>
<comment type="function">
    <text evidence="1">DNA-dependent ATPase involved in processing of recombination intermediates, plays a role in repairing DNA breaks. Stimulates the branch migration of RecA-mediated strand transfer reactions, allowing the 3' invading strand to extend heteroduplex DNA faster. Binds ssDNA in the presence of ADP but not other nucleotides, has ATPase activity that is stimulated by ssDNA and various branched DNA structures, but inhibited by SSB. Does not have RecA's homology-searching function.</text>
</comment>
<comment type="domain">
    <text evidence="1">Has a putative N-terminal zinc-finger, a middle region with homology to RecA with ATPase motifs including the RadA KNRFG motif, while the C-terminus is homologous to Lon protease.</text>
</comment>
<comment type="similarity">
    <text evidence="1">Belongs to the RecA family. RadA subfamily.</text>
</comment>
<evidence type="ECO:0000255" key="1">
    <source>
        <dbReference type="HAMAP-Rule" id="MF_01498"/>
    </source>
</evidence>
<feature type="chain" id="PRO_0000286661" description="DNA repair protein RadA">
    <location>
        <begin position="1"/>
        <end position="445"/>
    </location>
</feature>
<feature type="zinc finger region" description="C4-type" evidence="1">
    <location>
        <begin position="10"/>
        <end position="27"/>
    </location>
</feature>
<feature type="region of interest" description="Lon-protease-like" evidence="1">
    <location>
        <begin position="348"/>
        <end position="445"/>
    </location>
</feature>
<feature type="short sequence motif" description="RadA KNRFG motif" evidence="1">
    <location>
        <begin position="249"/>
        <end position="253"/>
    </location>
</feature>
<feature type="binding site" evidence="1">
    <location>
        <begin position="90"/>
        <end position="97"/>
    </location>
    <ligand>
        <name>ATP</name>
        <dbReference type="ChEBI" id="CHEBI:30616"/>
    </ligand>
</feature>
<organism>
    <name type="scientific">Rickettsia typhi (strain ATCC VR-144 / Wilmington)</name>
    <dbReference type="NCBI Taxonomy" id="257363"/>
    <lineage>
        <taxon>Bacteria</taxon>
        <taxon>Pseudomonadati</taxon>
        <taxon>Pseudomonadota</taxon>
        <taxon>Alphaproteobacteria</taxon>
        <taxon>Rickettsiales</taxon>
        <taxon>Rickettsiaceae</taxon>
        <taxon>Rickettsieae</taxon>
        <taxon>Rickettsia</taxon>
        <taxon>typhus group</taxon>
    </lineage>
</organism>